<reference key="1">
    <citation type="journal article" date="1991" name="J. Virol.">
        <title>Evolutionary analysis of the influenza A virus M gene with comparison of the M1 and M2 proteins.</title>
        <authorList>
            <person name="Ito T."/>
            <person name="Gorman O.T."/>
            <person name="Kawaoka Y."/>
            <person name="Bean W.J."/>
            <person name="Webster R.G."/>
        </authorList>
    </citation>
    <scope>NUCLEOTIDE SEQUENCE [GENOMIC RNA]</scope>
</reference>
<accession>Q67176</accession>
<organism>
    <name type="scientific">Influenza A virus (strain A/Gull/Maryland/1824/1978 H13N6)</name>
    <dbReference type="NCBI Taxonomy" id="385602"/>
    <lineage>
        <taxon>Viruses</taxon>
        <taxon>Riboviria</taxon>
        <taxon>Orthornavirae</taxon>
        <taxon>Negarnaviricota</taxon>
        <taxon>Polyploviricotina</taxon>
        <taxon>Insthoviricetes</taxon>
        <taxon>Articulavirales</taxon>
        <taxon>Orthomyxoviridae</taxon>
        <taxon>Alphainfluenzavirus</taxon>
        <taxon>Alphainfluenzavirus influenzae</taxon>
        <taxon>Influenza A virus</taxon>
    </lineage>
</organism>
<proteinExistence type="inferred from homology"/>
<evidence type="ECO:0000255" key="1">
    <source>
        <dbReference type="HAMAP-Rule" id="MF_04069"/>
    </source>
</evidence>
<evidence type="ECO:0000256" key="2">
    <source>
        <dbReference type="SAM" id="MobiDB-lite"/>
    </source>
</evidence>
<organismHost>
    <name type="scientific">Aves</name>
    <dbReference type="NCBI Taxonomy" id="8782"/>
</organismHost>
<gene>
    <name evidence="1" type="primary">M</name>
</gene>
<dbReference type="EMBL" id="M63539">
    <property type="protein sequence ID" value="AAA43297.1"/>
    <property type="molecule type" value="Genomic_RNA"/>
</dbReference>
<dbReference type="SMR" id="Q67176"/>
<dbReference type="GlyCosmos" id="Q67176">
    <property type="glycosylation" value="1 site, No reported glycans"/>
</dbReference>
<dbReference type="GO" id="GO:0020002">
    <property type="term" value="C:host cell plasma membrane"/>
    <property type="evidence" value="ECO:0007669"/>
    <property type="project" value="UniProtKB-SubCell"/>
</dbReference>
<dbReference type="GO" id="GO:0016020">
    <property type="term" value="C:membrane"/>
    <property type="evidence" value="ECO:0007669"/>
    <property type="project" value="UniProtKB-UniRule"/>
</dbReference>
<dbReference type="GO" id="GO:0055036">
    <property type="term" value="C:virion membrane"/>
    <property type="evidence" value="ECO:0007669"/>
    <property type="project" value="UniProtKB-SubCell"/>
</dbReference>
<dbReference type="GO" id="GO:0005216">
    <property type="term" value="F:monoatomic ion channel activity"/>
    <property type="evidence" value="ECO:0007669"/>
    <property type="project" value="UniProtKB-UniRule"/>
</dbReference>
<dbReference type="GO" id="GO:0015078">
    <property type="term" value="F:proton transmembrane transporter activity"/>
    <property type="evidence" value="ECO:0007669"/>
    <property type="project" value="UniProtKB-UniRule"/>
</dbReference>
<dbReference type="GO" id="GO:0051259">
    <property type="term" value="P:protein complex oligomerization"/>
    <property type="evidence" value="ECO:0007669"/>
    <property type="project" value="UniProtKB-UniRule"/>
</dbReference>
<dbReference type="GO" id="GO:0044694">
    <property type="term" value="P:symbiont genome entry into host cell via pore formation in plasma membrane"/>
    <property type="evidence" value="ECO:0007669"/>
    <property type="project" value="UniProtKB-UniRule"/>
</dbReference>
<dbReference type="GO" id="GO:0140321">
    <property type="term" value="P:symbiont-mediated suppression of host autophagy"/>
    <property type="evidence" value="ECO:0007669"/>
    <property type="project" value="UniProtKB-KW"/>
</dbReference>
<dbReference type="Gene3D" id="6.10.250.1640">
    <property type="match status" value="1"/>
</dbReference>
<dbReference type="HAMAP" id="MF_04069">
    <property type="entry name" value="INFV_M2"/>
    <property type="match status" value="1"/>
</dbReference>
<dbReference type="InterPro" id="IPR002089">
    <property type="entry name" value="Flu_M2"/>
</dbReference>
<dbReference type="Pfam" id="PF00599">
    <property type="entry name" value="Flu_M2"/>
    <property type="match status" value="1"/>
</dbReference>
<feature type="chain" id="PRO_0000326365" description="Matrix protein 2">
    <location>
        <begin position="1"/>
        <end position="97"/>
    </location>
</feature>
<feature type="topological domain" description="Virion surface" evidence="1">
    <location>
        <begin position="1"/>
        <end position="22"/>
    </location>
</feature>
<feature type="transmembrane region" description="Helical; Signal-anchor for type III membrane protein" evidence="1">
    <location>
        <begin position="23"/>
        <end position="43"/>
    </location>
</feature>
<feature type="topological domain" description="Intravirion" evidence="1">
    <location>
        <begin position="44"/>
        <end position="97"/>
    </location>
</feature>
<feature type="region of interest" description="Disordered" evidence="2">
    <location>
        <begin position="60"/>
        <end position="84"/>
    </location>
</feature>
<feature type="site" description="Essential for channel activity, possibly by being protonated during channel activation, and by forming the channel gate and the selective filter" evidence="1">
    <location>
        <position position="37"/>
    </location>
</feature>
<feature type="site" description="Seems to be involved in pH gating" evidence="1">
    <location>
        <position position="41"/>
    </location>
</feature>
<feature type="modified residue" description="Phosphoserine; by host" evidence="1">
    <location>
        <position position="64"/>
    </location>
</feature>
<feature type="modified residue" description="Phosphoserine; by host" evidence="1">
    <location>
        <position position="82"/>
    </location>
</feature>
<feature type="lipid moiety-binding region" description="S-palmitoyl cysteine; by host" evidence="1">
    <location>
        <position position="50"/>
    </location>
</feature>
<feature type="glycosylation site" description="N-linked (GlcNAc...) asparagine; by host" evidence="1">
    <location>
        <position position="20"/>
    </location>
</feature>
<feature type="disulfide bond" description="Interchain (with C-17)" evidence="1">
    <location>
        <position position="17"/>
    </location>
</feature>
<feature type="disulfide bond" description="Interchain (with C-19)" evidence="1">
    <location>
        <position position="19"/>
    </location>
</feature>
<name>M2_I78AF</name>
<sequence length="97" mass="11232">MSLLTEVETHTRSGWECRCNDSSDPLVIAASIIGILHLILWIFDRLFFKCIYRRLKYGLKRGPSTEGVPESMREEYQQEKQSAVDVDDGHFVNIELE</sequence>
<keyword id="KW-0025">Alternative splicing</keyword>
<keyword id="KW-1015">Disulfide bond</keyword>
<keyword id="KW-0325">Glycoprotein</keyword>
<keyword id="KW-1032">Host cell membrane</keyword>
<keyword id="KW-1043">Host membrane</keyword>
<keyword id="KW-0945">Host-virus interaction</keyword>
<keyword id="KW-0375">Hydrogen ion transport</keyword>
<keyword id="KW-1083">Inhibition of host autophagy by virus</keyword>
<keyword id="KW-0407">Ion channel</keyword>
<keyword id="KW-0406">Ion transport</keyword>
<keyword id="KW-0449">Lipoprotein</keyword>
<keyword id="KW-0472">Membrane</keyword>
<keyword id="KW-0564">Palmitate</keyword>
<keyword id="KW-0597">Phosphoprotein</keyword>
<keyword id="KW-0735">Signal-anchor</keyword>
<keyword id="KW-0812">Transmembrane</keyword>
<keyword id="KW-1133">Transmembrane helix</keyword>
<keyword id="KW-0813">Transport</keyword>
<keyword id="KW-1182">Viral ion channel</keyword>
<keyword id="KW-0946">Virion</keyword>
<comment type="function">
    <text evidence="1">Forms a proton-selective ion channel that is necessary for the efficient release of the viral genome during virus entry. After attaching to the cell surface, the virion enters the cell by endocytosis. Acidification of the endosome triggers M2 ion channel activity. The influx of protons into virion interior is believed to disrupt interactions between the viral ribonucleoprotein (RNP), matrix protein 1 (M1), and lipid bilayers, thereby freeing the viral genome from interaction with viral proteins and enabling RNA segments to migrate to the host cell nucleus, where influenza virus RNA transcription and replication occur. Also plays a role in viral proteins secretory pathway. Elevates the intravesicular pH of normally acidic compartments, such as trans-Golgi network, preventing newly formed hemagglutinin from premature switching to the fusion-active conformation.</text>
</comment>
<comment type="activity regulation">
    <text>The M2 protein from most influenza A strains is inhibited by amantadine and rimantadine, resulting in viral uncoating incapacity. Emergence of amantadine-resistant variants is usually rapid.</text>
</comment>
<comment type="subunit">
    <text evidence="1">Homotetramer; composed of two disulfide-linked dimers held together by non-covalent interactions. May interact with matrix protein 1.</text>
</comment>
<comment type="subcellular location">
    <subcellularLocation>
        <location evidence="1">Virion membrane</location>
    </subcellularLocation>
    <subcellularLocation>
        <location evidence="1">Host apical cell membrane</location>
        <topology evidence="1">Single-pass type III membrane protein</topology>
    </subcellularLocation>
    <text evidence="1">Abundantly expressed at the apical plasma membrane in infected polarized epithelial cells, in close proximity to budding and assembled virions. Minor component of virions (only 16-20 molecules/virion).</text>
</comment>
<comment type="alternative products">
    <event type="alternative splicing"/>
    <isoform>
        <id>Q67176-1</id>
        <name>M2</name>
        <sequence type="displayed"/>
    </isoform>
    <isoform>
        <id>Q67177-1</id>
        <name>M1</name>
        <sequence type="external"/>
    </isoform>
    <text>Only the first 9 residues are shared by the 2 isoforms.</text>
</comment>
<comment type="domain">
    <text evidence="1">Cytoplasmic tail plays an important role in virion assembly and morphogenesis.</text>
</comment>
<comment type="miscellaneous">
    <text evidence="1">When the channel is activated, one or more imidazole moieties of His-37 probably become bi-protonated.</text>
</comment>
<comment type="similarity">
    <text evidence="1">Belongs to the influenza viruses matrix protein M2 family.</text>
</comment>
<protein>
    <recommendedName>
        <fullName evidence="1">Matrix protein 2</fullName>
    </recommendedName>
    <alternativeName>
        <fullName evidence="1">Proton channel protein M2</fullName>
    </alternativeName>
</protein>